<gene>
    <name type="primary">LYVE1</name>
    <name type="synonym">CRSBP1</name>
    <name type="synonym">HAR</name>
    <name type="synonym">XLKD1</name>
    <name type="ORF">UNQ230/PRO263</name>
</gene>
<organism>
    <name type="scientific">Homo sapiens</name>
    <name type="common">Human</name>
    <dbReference type="NCBI Taxonomy" id="9606"/>
    <lineage>
        <taxon>Eukaryota</taxon>
        <taxon>Metazoa</taxon>
        <taxon>Chordata</taxon>
        <taxon>Craniata</taxon>
        <taxon>Vertebrata</taxon>
        <taxon>Euteleostomi</taxon>
        <taxon>Mammalia</taxon>
        <taxon>Eutheria</taxon>
        <taxon>Euarchontoglires</taxon>
        <taxon>Primates</taxon>
        <taxon>Haplorrhini</taxon>
        <taxon>Catarrhini</taxon>
        <taxon>Hominidae</taxon>
        <taxon>Homo</taxon>
    </lineage>
</organism>
<reference key="1">
    <citation type="journal article" date="1999" name="J. Cell Biol.">
        <title>LYVE-1, a new homologue of the CD44 glycoprotein is a lymph-specific receptor for hyaluronan.</title>
        <authorList>
            <person name="Banerji S."/>
            <person name="Ni J."/>
            <person name="Wang S.-X."/>
            <person name="Clasper S."/>
            <person name="Su J."/>
            <person name="Tammi R."/>
            <person name="Jones M."/>
            <person name="Jackson D.G."/>
        </authorList>
    </citation>
    <scope>NUCLEOTIDE SEQUENCE [MRNA]</scope>
    <scope>FUNCTION</scope>
    <scope>SUBCELLULAR LOCATION</scope>
    <scope>TISSUE SPECIFICITY</scope>
</reference>
<reference key="2">
    <citation type="submission" date="1999-10" db="EMBL/GenBank/DDBJ databases">
        <title>HAR: a novel homolog of CD44 and putative hyaluronic acid receptor encoded by a gene on human chromosome 11p15.</title>
        <authorList>
            <person name="Winkelmann J.C."/>
            <person name="Basu S."/>
            <person name="Ozdemir E."/>
            <person name="Blough R.I."/>
        </authorList>
    </citation>
    <scope>NUCLEOTIDE SEQUENCE [MRNA]</scope>
</reference>
<reference key="3">
    <citation type="journal article" date="2003" name="Genome Res.">
        <title>The secreted protein discovery initiative (SPDI), a large-scale effort to identify novel human secreted and transmembrane proteins: a bioinformatics assessment.</title>
        <authorList>
            <person name="Clark H.F."/>
            <person name="Gurney A.L."/>
            <person name="Abaya E."/>
            <person name="Baker K."/>
            <person name="Baldwin D.T."/>
            <person name="Brush J."/>
            <person name="Chen J."/>
            <person name="Chow B."/>
            <person name="Chui C."/>
            <person name="Crowley C."/>
            <person name="Currell B."/>
            <person name="Deuel B."/>
            <person name="Dowd P."/>
            <person name="Eaton D."/>
            <person name="Foster J.S."/>
            <person name="Grimaldi C."/>
            <person name="Gu Q."/>
            <person name="Hass P.E."/>
            <person name="Heldens S."/>
            <person name="Huang A."/>
            <person name="Kim H.S."/>
            <person name="Klimowski L."/>
            <person name="Jin Y."/>
            <person name="Johnson S."/>
            <person name="Lee J."/>
            <person name="Lewis L."/>
            <person name="Liao D."/>
            <person name="Mark M.R."/>
            <person name="Robbie E."/>
            <person name="Sanchez C."/>
            <person name="Schoenfeld J."/>
            <person name="Seshagiri S."/>
            <person name="Simmons L."/>
            <person name="Singh J."/>
            <person name="Smith V."/>
            <person name="Stinson J."/>
            <person name="Vagts A."/>
            <person name="Vandlen R.L."/>
            <person name="Watanabe C."/>
            <person name="Wieand D."/>
            <person name="Woods K."/>
            <person name="Xie M.-H."/>
            <person name="Yansura D.G."/>
            <person name="Yi S."/>
            <person name="Yu G."/>
            <person name="Yuan J."/>
            <person name="Zhang M."/>
            <person name="Zhang Z."/>
            <person name="Goddard A.D."/>
            <person name="Wood W.I."/>
            <person name="Godowski P.J."/>
            <person name="Gray A.M."/>
        </authorList>
    </citation>
    <scope>NUCLEOTIDE SEQUENCE [LARGE SCALE MRNA]</scope>
</reference>
<reference key="4">
    <citation type="journal article" date="2004" name="Genome Res.">
        <title>The status, quality, and expansion of the NIH full-length cDNA project: the Mammalian Gene Collection (MGC).</title>
        <authorList>
            <consortium name="The MGC Project Team"/>
        </authorList>
    </citation>
    <scope>NUCLEOTIDE SEQUENCE [LARGE SCALE MRNA]</scope>
    <scope>VARIANT ARG-116</scope>
    <source>
        <tissue>Liver</tissue>
    </source>
</reference>
<reference key="5">
    <citation type="journal article" date="2005" name="J. Proteome Res.">
        <title>Human plasma N-glycoproteome analysis by immunoaffinity subtraction, hydrazide chemistry, and mass spectrometry.</title>
        <authorList>
            <person name="Liu T."/>
            <person name="Qian W.-J."/>
            <person name="Gritsenko M.A."/>
            <person name="Camp D.G. II"/>
            <person name="Monroe M.E."/>
            <person name="Moore R.J."/>
            <person name="Smith R.D."/>
        </authorList>
    </citation>
    <scope>GLYCOSYLATION [LARGE SCALE ANALYSIS] AT ASN-53</scope>
    <source>
        <tissue>Plasma</tissue>
    </source>
</reference>
<reference key="6">
    <citation type="journal article" date="2009" name="J. Proteome Res.">
        <title>Glycoproteomics analysis of human liver tissue by combination of multiple enzyme digestion and hydrazide chemistry.</title>
        <authorList>
            <person name="Chen R."/>
            <person name="Jiang X."/>
            <person name="Sun D."/>
            <person name="Han G."/>
            <person name="Wang F."/>
            <person name="Ye M."/>
            <person name="Wang L."/>
            <person name="Zou H."/>
        </authorList>
    </citation>
    <scope>GLYCOSYLATION [LARGE SCALE ANALYSIS] AT ASN-53</scope>
    <source>
        <tissue>Liver</tissue>
    </source>
</reference>
<reference key="7">
    <citation type="journal article" date="2016" name="J. Biol. Chem.">
        <title>Binding of Hyaluronan to the Native Lymphatic Vessel Endothelial Receptor LYVE-1 Is Critically Dependent on Receptor Clustering and Hyaluronan Organization.</title>
        <authorList>
            <person name="Lawrance W."/>
            <person name="Banerji S."/>
            <person name="Day A.J."/>
            <person name="Bhattacharjee S."/>
            <person name="Jackson D.G."/>
        </authorList>
    </citation>
    <scope>FUNCTION</scope>
    <scope>SUBCELLULAR LOCATION</scope>
    <scope>TISSUE SPECIFICITY</scope>
</reference>
<accession>Q9Y5Y7</accession>
<accession>Q8TC18</accession>
<accession>Q9UNF4</accession>
<proteinExistence type="evidence at protein level"/>
<comment type="function">
    <text evidence="5 9">Ligand-specific transporter trafficking between intracellular organelles (TGN) and the plasma membrane. Plays a role in autocrine regulation of cell growth mediated by growth regulators containing cell surface retention sequence binding (CRS). May act as a hyaluronan (HA) transporter, either mediating its uptake for catabolism within lymphatic endothelial cells themselves, or its transport into the lumen of afferent lymphatic vessels for subsequent re-uptake and degradation in lymph nodes (PubMed:10037799). Binds to pericelluar hyaluronan matrices deposited on the surface of leukocytes and facilitates cell adhesion and migration through lymphatic endothelium (PubMed:26823460).</text>
</comment>
<comment type="subunit">
    <text evidence="1">Homodimer; disulfide-linked. Interacts with PDGFB and IGFBP3. Forms a transient ternary complex with PDGFB and PDGFRB in TGN (By similarity).</text>
</comment>
<comment type="interaction">
    <interactant intactId="EBI-10329546">
        <id>Q9Y5Y7</id>
    </interactant>
    <interactant intactId="EBI-11957045">
        <id>Q9NVV5-2</id>
        <label>AIG1</label>
    </interactant>
    <organismsDiffer>false</organismsDiffer>
    <experiments>3</experiments>
</comment>
<comment type="interaction">
    <interactant intactId="EBI-10329546">
        <id>Q9Y5Y7</id>
    </interactant>
    <interactant intactId="EBI-12820279">
        <id>Q96PS8</id>
        <label>AQP10</label>
    </interactant>
    <organismsDiffer>false</organismsDiffer>
    <experiments>3</experiments>
</comment>
<comment type="interaction">
    <interactant intactId="EBI-10329546">
        <id>Q9Y5Y7</id>
    </interactant>
    <interactant intactId="EBI-4402346">
        <id>P51798</id>
        <label>CLCN7</label>
    </interactant>
    <organismsDiffer>false</organismsDiffer>
    <experiments>3</experiments>
</comment>
<comment type="interaction">
    <interactant intactId="EBI-10329546">
        <id>Q9Y5Y7</id>
    </interactant>
    <interactant intactId="EBI-3867333">
        <id>A8MQ03</id>
        <label>CYSRT1</label>
    </interactant>
    <organismsDiffer>false</organismsDiffer>
    <experiments>3</experiments>
</comment>
<comment type="interaction">
    <interactant intactId="EBI-10329546">
        <id>Q9Y5Y7</id>
    </interactant>
    <interactant intactId="EBI-3907816">
        <id>P54852</id>
        <label>EMP3</label>
    </interactant>
    <organismsDiffer>false</organismsDiffer>
    <experiments>3</experiments>
</comment>
<comment type="interaction">
    <interactant intactId="EBI-10329546">
        <id>Q9Y5Y7</id>
    </interactant>
    <interactant intactId="EBI-1047093">
        <id>O76011</id>
        <label>KRT34</label>
    </interactant>
    <organismsDiffer>false</organismsDiffer>
    <experiments>3</experiments>
</comment>
<comment type="interaction">
    <interactant intactId="EBI-10329546">
        <id>Q9Y5Y7</id>
    </interactant>
    <interactant intactId="EBI-10171774">
        <id>P60410</id>
        <label>KRTAP10-8</label>
    </interactant>
    <organismsDiffer>false</organismsDiffer>
    <experiments>3</experiments>
</comment>
<comment type="interaction">
    <interactant intactId="EBI-10329546">
        <id>Q9Y5Y7</id>
    </interactant>
    <interactant intactId="EBI-11953334">
        <id>P60328</id>
        <label>KRTAP12-3</label>
    </interactant>
    <organismsDiffer>false</organismsDiffer>
    <experiments>3</experiments>
</comment>
<comment type="interaction">
    <interactant intactId="EBI-10329546">
        <id>Q9Y5Y7</id>
    </interactant>
    <interactant intactId="EBI-11962084">
        <id>Q3LI66</id>
        <label>KRTAP6-2</label>
    </interactant>
    <organismsDiffer>false</organismsDiffer>
    <experiments>3</experiments>
</comment>
<comment type="interaction">
    <interactant intactId="EBI-10329546">
        <id>Q9Y5Y7</id>
    </interactant>
    <interactant intactId="EBI-1044640">
        <id>Q9BYQ4</id>
        <label>KRTAP9-2</label>
    </interactant>
    <organismsDiffer>false</organismsDiffer>
    <experiments>3</experiments>
</comment>
<comment type="interaction">
    <interactant intactId="EBI-10329546">
        <id>Q9Y5Y7</id>
    </interactant>
    <interactant intactId="EBI-10317425">
        <id>Q9NZG7</id>
        <label>NINJ2</label>
    </interactant>
    <organismsDiffer>false</organismsDiffer>
    <experiments>3</experiments>
</comment>
<comment type="interaction">
    <interactant intactId="EBI-10329546">
        <id>Q9Y5Y7</id>
    </interactant>
    <interactant intactId="EBI-22310682">
        <id>P0DPK4</id>
        <label>NOTCH2NLC</label>
    </interactant>
    <organismsDiffer>false</organismsDiffer>
    <experiments>3</experiments>
</comment>
<comment type="interaction">
    <interactant intactId="EBI-10329546">
        <id>Q9Y5Y7</id>
    </interactant>
    <interactant intactId="EBI-10264528">
        <id>Q8IZ57</id>
        <label>NRSN1</label>
    </interactant>
    <organismsDiffer>false</organismsDiffer>
    <experiments>3</experiments>
</comment>
<comment type="interaction">
    <interactant intactId="EBI-10329546">
        <id>Q9Y5Y7</id>
    </interactant>
    <interactant intactId="EBI-17180304">
        <id>Q07326</id>
        <label>PIGF</label>
    </interactant>
    <organismsDiffer>false</organismsDiffer>
    <experiments>3</experiments>
</comment>
<comment type="interaction">
    <interactant intactId="EBI-10329546">
        <id>Q9Y5Y7</id>
    </interactant>
    <interactant intactId="EBI-749270">
        <id>Q8N6R1</id>
        <label>SERP2</label>
    </interactant>
    <organismsDiffer>false</organismsDiffer>
    <experiments>3</experiments>
</comment>
<comment type="interaction">
    <interactant intactId="EBI-10329546">
        <id>Q9Y5Y7</id>
    </interactant>
    <interactant intactId="EBI-8644112">
        <id>Q9BRI3</id>
        <label>SLC30A2</label>
    </interactant>
    <organismsDiffer>false</organismsDiffer>
    <experiments>3</experiments>
</comment>
<comment type="interaction">
    <interactant intactId="EBI-10329546">
        <id>Q9Y5Y7</id>
    </interactant>
    <interactant intactId="EBI-10314552">
        <id>Q9NVC3</id>
        <label>SLC38A7</label>
    </interactant>
    <organismsDiffer>false</organismsDiffer>
    <experiments>3</experiments>
</comment>
<comment type="interaction">
    <interactant intactId="EBI-10329546">
        <id>Q9Y5Y7</id>
    </interactant>
    <interactant intactId="EBI-10290130">
        <id>Q96JW4</id>
        <label>SLC41A2</label>
    </interactant>
    <organismsDiffer>false</organismsDiffer>
    <experiments>3</experiments>
</comment>
<comment type="interaction">
    <interactant intactId="EBI-10329546">
        <id>Q9Y5Y7</id>
    </interactant>
    <interactant intactId="EBI-310962">
        <id>Q9UPZ6</id>
        <label>THSD7A</label>
    </interactant>
    <organismsDiffer>false</organismsDiffer>
    <experiments>3</experiments>
</comment>
<comment type="interaction">
    <interactant intactId="EBI-10329546">
        <id>Q9Y5Y7</id>
    </interactant>
    <interactant intactId="EBI-311394">
        <id>Q9C0I4</id>
        <label>THSD7B</label>
    </interactant>
    <organismsDiffer>false</organismsDiffer>
    <experiments>3</experiments>
</comment>
<comment type="interaction">
    <interactant intactId="EBI-10329546">
        <id>Q9Y5Y7</id>
    </interactant>
    <interactant intactId="EBI-988826">
        <id>Q9Y385</id>
        <label>UBE2J1</label>
    </interactant>
    <organismsDiffer>false</organismsDiffer>
    <experiments>3</experiments>
</comment>
<comment type="interaction">
    <interactant intactId="EBI-10329546">
        <id>Q9Y5Y7</id>
    </interactant>
    <interactant intactId="EBI-751210">
        <id>Q96EC8</id>
        <label>YIPF6</label>
    </interactant>
    <organismsDiffer>false</organismsDiffer>
    <experiments>3</experiments>
</comment>
<comment type="subcellular location">
    <subcellularLocation>
        <location evidence="5 9">Cell membrane</location>
        <topology evidence="5">Single-pass type I membrane protein</topology>
    </subcellularLocation>
    <text>Localized to the plasma membrane and in vesicles near extranuclear membranes which may represent trans-Golgi network (TGN) and endosomes/prelysosomeal compartments. Undergoes ligand-dependent internalization and recycling at the cell surface. Localizes at cell-cell junctions.</text>
</comment>
<comment type="tissue specificity">
    <text evidence="5 9">Mainly expressed in endothelial cells lining lymphatic vessels.</text>
</comment>
<comment type="PTM">
    <text evidence="1">O-glycosylated.</text>
</comment>
<protein>
    <recommendedName>
        <fullName>Lymphatic vessel endothelial hyaluronic acid receptor 1</fullName>
        <shortName>LYVE-1</shortName>
    </recommendedName>
    <alternativeName>
        <fullName>Cell surface retention sequence-binding protein 1</fullName>
        <shortName>CRSBP-1</shortName>
    </alternativeName>
    <alternativeName>
        <fullName>Extracellular link domain-containing protein 1</fullName>
    </alternativeName>
    <alternativeName>
        <fullName>Hyaluronic acid receptor</fullName>
    </alternativeName>
</protein>
<name>LYVE1_HUMAN</name>
<evidence type="ECO:0000250" key="1"/>
<evidence type="ECO:0000255" key="2"/>
<evidence type="ECO:0000255" key="3">
    <source>
        <dbReference type="PROSITE-ProRule" id="PRU00323"/>
    </source>
</evidence>
<evidence type="ECO:0000256" key="4">
    <source>
        <dbReference type="SAM" id="MobiDB-lite"/>
    </source>
</evidence>
<evidence type="ECO:0000269" key="5">
    <source>
    </source>
</evidence>
<evidence type="ECO:0000269" key="6">
    <source>
    </source>
</evidence>
<evidence type="ECO:0000269" key="7">
    <source>
    </source>
</evidence>
<evidence type="ECO:0000269" key="8">
    <source>
    </source>
</evidence>
<evidence type="ECO:0000269" key="9">
    <source>
    </source>
</evidence>
<evidence type="ECO:0000305" key="10"/>
<evidence type="ECO:0007829" key="11">
    <source>
        <dbReference type="PDB" id="8OS2"/>
    </source>
</evidence>
<keyword id="KW-0002">3D-structure</keyword>
<keyword id="KW-1003">Cell membrane</keyword>
<keyword id="KW-1015">Disulfide bond</keyword>
<keyword id="KW-0325">Glycoprotein</keyword>
<keyword id="KW-0472">Membrane</keyword>
<keyword id="KW-1267">Proteomics identification</keyword>
<keyword id="KW-0675">Receptor</keyword>
<keyword id="KW-1185">Reference proteome</keyword>
<keyword id="KW-0732">Signal</keyword>
<keyword id="KW-0812">Transmembrane</keyword>
<keyword id="KW-1133">Transmembrane helix</keyword>
<keyword id="KW-0813">Transport</keyword>
<feature type="signal peptide" evidence="2">
    <location>
        <begin position="1"/>
        <end position="19"/>
    </location>
</feature>
<feature type="chain" id="PRO_0000252133" description="Lymphatic vessel endothelial hyaluronic acid receptor 1">
    <location>
        <begin position="20"/>
        <end position="322"/>
    </location>
</feature>
<feature type="topological domain" description="Extracellular" evidence="2">
    <location>
        <begin position="20"/>
        <end position="238"/>
    </location>
</feature>
<feature type="transmembrane region" description="Helical" evidence="2">
    <location>
        <begin position="239"/>
        <end position="259"/>
    </location>
</feature>
<feature type="topological domain" description="Cytoplasmic" evidence="2">
    <location>
        <begin position="260"/>
        <end position="322"/>
    </location>
</feature>
<feature type="domain" description="Link" evidence="3">
    <location>
        <begin position="40"/>
        <end position="130"/>
    </location>
</feature>
<feature type="region of interest" description="Disordered" evidence="4">
    <location>
        <begin position="279"/>
        <end position="322"/>
    </location>
</feature>
<feature type="compositionally biased region" description="Basic and acidic residues" evidence="4">
    <location>
        <begin position="279"/>
        <end position="309"/>
    </location>
</feature>
<feature type="glycosylation site" description="N-linked (GlcNAc...) asparagine" evidence="7 8">
    <location>
        <position position="53"/>
    </location>
</feature>
<feature type="glycosylation site" description="N-linked (GlcNAc...) asparagine" evidence="2">
    <location>
        <position position="130"/>
    </location>
</feature>
<feature type="disulfide bond" evidence="3">
    <location>
        <begin position="61"/>
        <end position="128"/>
    </location>
</feature>
<feature type="disulfide bond" evidence="3">
    <location>
        <begin position="85"/>
        <end position="106"/>
    </location>
</feature>
<feature type="sequence variant" id="VAR_027763" description="In dbSNP:rs17852369." evidence="6">
    <original>W</original>
    <variation>R</variation>
    <location>
        <position position="116"/>
    </location>
</feature>
<feature type="sequence variant" id="VAR_027764" description="In dbSNP:rs16907980.">
    <original>T</original>
    <variation>I</variation>
    <location>
        <position position="214"/>
    </location>
</feature>
<feature type="sequence variant" id="VAR_027765" description="In dbSNP:rs7948666.">
    <original>V</original>
    <variation>M</variation>
    <location>
        <position position="315"/>
    </location>
</feature>
<feature type="sequence conflict" description="In Ref. 1; AAD42764." evidence="10" ref="1">
    <original>E</original>
    <variation>D</variation>
    <location>
        <position position="75"/>
    </location>
</feature>
<feature type="sequence conflict" description="In Ref. 1; AAD42764." evidence="10" ref="1">
    <original>A</original>
    <variation>G</variation>
    <location>
        <position position="125"/>
    </location>
</feature>
<feature type="sequence conflict" description="In Ref. 1; AAD42764." evidence="10" ref="1">
    <original>C</original>
    <variation>R</variation>
    <location>
        <position position="139"/>
    </location>
</feature>
<feature type="helix" evidence="11">
    <location>
        <begin position="27"/>
        <end position="29"/>
    </location>
</feature>
<feature type="strand" evidence="11">
    <location>
        <begin position="30"/>
        <end position="33"/>
    </location>
</feature>
<feature type="strand" evidence="11">
    <location>
        <begin position="41"/>
        <end position="50"/>
    </location>
</feature>
<feature type="helix" evidence="11">
    <location>
        <begin position="54"/>
        <end position="63"/>
    </location>
</feature>
<feature type="helix" evidence="11">
    <location>
        <begin position="71"/>
        <end position="79"/>
    </location>
</feature>
<feature type="strand" evidence="11">
    <location>
        <begin position="88"/>
        <end position="90"/>
    </location>
</feature>
<feature type="turn" evidence="11">
    <location>
        <begin position="91"/>
        <end position="93"/>
    </location>
</feature>
<feature type="strand" evidence="11">
    <location>
        <begin position="94"/>
        <end position="101"/>
    </location>
</feature>
<feature type="turn" evidence="11">
    <location>
        <begin position="104"/>
        <end position="109"/>
    </location>
</feature>
<feature type="strand" evidence="11">
    <location>
        <begin position="112"/>
        <end position="117"/>
    </location>
</feature>
<feature type="strand" evidence="11">
    <location>
        <begin position="124"/>
        <end position="129"/>
    </location>
</feature>
<feature type="strand" evidence="11">
    <location>
        <begin position="135"/>
        <end position="137"/>
    </location>
</feature>
<sequence>MARCFSLVLLLTSIWTTRLLVQGSLRAEELSIQVSCRIMGITLVSKKANQQLNFTEAKEACRLLGLSLAGKDQVETALKASFETCSYGWVGDGFVVISRISPNPKCGKNGVGVLIWKVPVSRQFAAYCYNSSDTWTNSCIPEIITTKDPIFNTQTATQTTEFIVSDSTYSVASPYSTIPAPTTTPPAPASTSIPRRKKLICVTEVFMETSTMSTETEPFVENKAAFKNEAAGFGGVPTALLVLALLFFGAAAGLGFCYVKRYVKAFPFTNKNQQKEMIETKVVKEEKANDSNPNEESKKTDKNPEESKSPSKTTVRCLEAEV</sequence>
<dbReference type="EMBL" id="AF118108">
    <property type="protein sequence ID" value="AAD42764.1"/>
    <property type="molecule type" value="mRNA"/>
</dbReference>
<dbReference type="EMBL" id="AF127670">
    <property type="protein sequence ID" value="AAD49220.2"/>
    <property type="molecule type" value="mRNA"/>
</dbReference>
<dbReference type="EMBL" id="AY358925">
    <property type="protein sequence ID" value="AAQ89284.1"/>
    <property type="molecule type" value="mRNA"/>
</dbReference>
<dbReference type="EMBL" id="BC026231">
    <property type="protein sequence ID" value="AAH26231.1"/>
    <property type="molecule type" value="mRNA"/>
</dbReference>
<dbReference type="CCDS" id="CCDS7804.1"/>
<dbReference type="RefSeq" id="NP_006682.2">
    <property type="nucleotide sequence ID" value="NM_006691.3"/>
</dbReference>
<dbReference type="PDB" id="8OS2">
    <property type="method" value="X-ray"/>
    <property type="resolution" value="1.64 A"/>
    <property type="chains" value="A=1-144"/>
</dbReference>
<dbReference type="PDB" id="8OXD">
    <property type="method" value="X-ray"/>
    <property type="resolution" value="1.32 A"/>
    <property type="chains" value="A=1-144"/>
</dbReference>
<dbReference type="PDBsum" id="8OS2"/>
<dbReference type="PDBsum" id="8OXD"/>
<dbReference type="SMR" id="Q9Y5Y7"/>
<dbReference type="BioGRID" id="116100">
    <property type="interactions" value="26"/>
</dbReference>
<dbReference type="FunCoup" id="Q9Y5Y7">
    <property type="interactions" value="140"/>
</dbReference>
<dbReference type="IntAct" id="Q9Y5Y7">
    <property type="interactions" value="22"/>
</dbReference>
<dbReference type="STRING" id="9606.ENSP00000256178"/>
<dbReference type="DrugBank" id="DB08818">
    <property type="generic name" value="Hyaluronic acid"/>
</dbReference>
<dbReference type="TCDB" id="9.B.87.1.26">
    <property type="family name" value="the selenoprotein p receptor (selp-receptor) family"/>
</dbReference>
<dbReference type="GlyConnect" id="734">
    <property type="glycosylation" value="12 N-Linked glycans (2 sites)"/>
</dbReference>
<dbReference type="GlyCosmos" id="Q9Y5Y7">
    <property type="glycosylation" value="4 sites, 14 glycans"/>
</dbReference>
<dbReference type="GlyGen" id="Q9Y5Y7">
    <property type="glycosylation" value="4 sites, 26 N-linked glycans (2 sites), 1 O-linked glycan (1 site)"/>
</dbReference>
<dbReference type="iPTMnet" id="Q9Y5Y7"/>
<dbReference type="PhosphoSitePlus" id="Q9Y5Y7"/>
<dbReference type="SwissPalm" id="Q9Y5Y7"/>
<dbReference type="BioMuta" id="LYVE1"/>
<dbReference type="DMDM" id="115502898"/>
<dbReference type="CPTAC" id="CPTAC-679"/>
<dbReference type="MassIVE" id="Q9Y5Y7"/>
<dbReference type="PaxDb" id="9606-ENSP00000256178"/>
<dbReference type="PeptideAtlas" id="Q9Y5Y7"/>
<dbReference type="ProteomicsDB" id="86544"/>
<dbReference type="Antibodypedia" id="24364">
    <property type="antibodies" value="855 antibodies from 38 providers"/>
</dbReference>
<dbReference type="DNASU" id="10894"/>
<dbReference type="Ensembl" id="ENST00000256178.8">
    <property type="protein sequence ID" value="ENSP00000256178.3"/>
    <property type="gene ID" value="ENSG00000133800.9"/>
</dbReference>
<dbReference type="GeneID" id="10894"/>
<dbReference type="KEGG" id="hsa:10894"/>
<dbReference type="MANE-Select" id="ENST00000256178.8">
    <property type="protein sequence ID" value="ENSP00000256178.3"/>
    <property type="RefSeq nucleotide sequence ID" value="NM_006691.4"/>
    <property type="RefSeq protein sequence ID" value="NP_006682.2"/>
</dbReference>
<dbReference type="UCSC" id="uc001miv.3">
    <property type="organism name" value="human"/>
</dbReference>
<dbReference type="AGR" id="HGNC:14687"/>
<dbReference type="CTD" id="10894"/>
<dbReference type="DisGeNET" id="10894"/>
<dbReference type="GeneCards" id="LYVE1"/>
<dbReference type="HGNC" id="HGNC:14687">
    <property type="gene designation" value="LYVE1"/>
</dbReference>
<dbReference type="HPA" id="ENSG00000133800">
    <property type="expression patterns" value="Tissue enhanced (adipose tissue, placenta)"/>
</dbReference>
<dbReference type="MIM" id="605702">
    <property type="type" value="gene"/>
</dbReference>
<dbReference type="neXtProt" id="NX_Q9Y5Y7"/>
<dbReference type="OpenTargets" id="ENSG00000133800"/>
<dbReference type="PharmGKB" id="PA162394799"/>
<dbReference type="VEuPathDB" id="HostDB:ENSG00000133800"/>
<dbReference type="eggNOG" id="ENOG502RY70">
    <property type="taxonomic scope" value="Eukaryota"/>
</dbReference>
<dbReference type="GeneTree" id="ENSGT00530000063822"/>
<dbReference type="HOGENOM" id="CLU_074364_1_0_1"/>
<dbReference type="InParanoid" id="Q9Y5Y7"/>
<dbReference type="OMA" id="ILPNPKC"/>
<dbReference type="OrthoDB" id="8952307at2759"/>
<dbReference type="PAN-GO" id="Q9Y5Y7">
    <property type="GO annotations" value="3 GO annotations based on evolutionary models"/>
</dbReference>
<dbReference type="PhylomeDB" id="Q9Y5Y7"/>
<dbReference type="TreeFam" id="TF334173"/>
<dbReference type="PathwayCommons" id="Q9Y5Y7"/>
<dbReference type="Reactome" id="R-HSA-2160916">
    <property type="pathway name" value="Hyaluronan uptake and degradation"/>
</dbReference>
<dbReference type="SignaLink" id="Q9Y5Y7"/>
<dbReference type="BioGRID-ORCS" id="10894">
    <property type="hits" value="9 hits in 1144 CRISPR screens"/>
</dbReference>
<dbReference type="ChiTaRS" id="LYVE1">
    <property type="organism name" value="human"/>
</dbReference>
<dbReference type="GeneWiki" id="LYVE1"/>
<dbReference type="GenomeRNAi" id="10894"/>
<dbReference type="Pharos" id="Q9Y5Y7">
    <property type="development level" value="Tbio"/>
</dbReference>
<dbReference type="PRO" id="PR:Q9Y5Y7"/>
<dbReference type="Proteomes" id="UP000005640">
    <property type="component" value="Chromosome 11"/>
</dbReference>
<dbReference type="RNAct" id="Q9Y5Y7">
    <property type="molecule type" value="protein"/>
</dbReference>
<dbReference type="Bgee" id="ENSG00000133800">
    <property type="expression patterns" value="Expressed in pericardium and 170 other cell types or tissues"/>
</dbReference>
<dbReference type="ExpressionAtlas" id="Q9Y5Y7">
    <property type="expression patterns" value="baseline and differential"/>
</dbReference>
<dbReference type="GO" id="GO:0070062">
    <property type="term" value="C:extracellular exosome"/>
    <property type="evidence" value="ECO:0007005"/>
    <property type="project" value="UniProtKB"/>
</dbReference>
<dbReference type="GO" id="GO:0016020">
    <property type="term" value="C:membrane"/>
    <property type="evidence" value="ECO:0000304"/>
    <property type="project" value="ProtInc"/>
</dbReference>
<dbReference type="GO" id="GO:0005886">
    <property type="term" value="C:plasma membrane"/>
    <property type="evidence" value="ECO:0000314"/>
    <property type="project" value="UniProtKB"/>
</dbReference>
<dbReference type="GO" id="GO:0038024">
    <property type="term" value="F:cargo receptor activity"/>
    <property type="evidence" value="ECO:0007669"/>
    <property type="project" value="Ensembl"/>
</dbReference>
<dbReference type="GO" id="GO:0005540">
    <property type="term" value="F:hyaluronic acid binding"/>
    <property type="evidence" value="ECO:0000314"/>
    <property type="project" value="UniProtKB"/>
</dbReference>
<dbReference type="GO" id="GO:0038023">
    <property type="term" value="F:signaling receptor activity"/>
    <property type="evidence" value="ECO:0000304"/>
    <property type="project" value="ProtInc"/>
</dbReference>
<dbReference type="GO" id="GO:0004888">
    <property type="term" value="F:transmembrane signaling receptor activity"/>
    <property type="evidence" value="ECO:0000318"/>
    <property type="project" value="GO_Central"/>
</dbReference>
<dbReference type="GO" id="GO:0009653">
    <property type="term" value="P:anatomical structure morphogenesis"/>
    <property type="evidence" value="ECO:0000304"/>
    <property type="project" value="ProtInc"/>
</dbReference>
<dbReference type="GO" id="GO:0007160">
    <property type="term" value="P:cell-matrix adhesion"/>
    <property type="evidence" value="ECO:0000304"/>
    <property type="project" value="ProtInc"/>
</dbReference>
<dbReference type="GO" id="GO:0030214">
    <property type="term" value="P:hyaluronan catabolic process"/>
    <property type="evidence" value="ECO:0007669"/>
    <property type="project" value="Ensembl"/>
</dbReference>
<dbReference type="GO" id="GO:0002693">
    <property type="term" value="P:positive regulation of cellular extravasation"/>
    <property type="evidence" value="ECO:0000314"/>
    <property type="project" value="UniProtKB"/>
</dbReference>
<dbReference type="GO" id="GO:0006898">
    <property type="term" value="P:receptor-mediated endocytosis"/>
    <property type="evidence" value="ECO:0007669"/>
    <property type="project" value="Ensembl"/>
</dbReference>
<dbReference type="GO" id="GO:0009611">
    <property type="term" value="P:response to wounding"/>
    <property type="evidence" value="ECO:0000304"/>
    <property type="project" value="ProtInc"/>
</dbReference>
<dbReference type="CDD" id="cd03516">
    <property type="entry name" value="Link_domain_CD44_like"/>
    <property type="match status" value="1"/>
</dbReference>
<dbReference type="FunFam" id="3.10.100.10:FF:000057">
    <property type="entry name" value="Lymphatic vessel endothelial hyaluronic acid receptor 1"/>
    <property type="match status" value="1"/>
</dbReference>
<dbReference type="Gene3D" id="3.10.100.10">
    <property type="entry name" value="Mannose-Binding Protein A, subunit A"/>
    <property type="match status" value="1"/>
</dbReference>
<dbReference type="InterPro" id="IPR016186">
    <property type="entry name" value="C-type_lectin-like/link_sf"/>
</dbReference>
<dbReference type="InterPro" id="IPR043210">
    <property type="entry name" value="CD44_antigen-like"/>
</dbReference>
<dbReference type="InterPro" id="IPR016187">
    <property type="entry name" value="CTDL_fold"/>
</dbReference>
<dbReference type="InterPro" id="IPR000538">
    <property type="entry name" value="Link_dom"/>
</dbReference>
<dbReference type="PANTHER" id="PTHR10225">
    <property type="entry name" value="HYALURONAN RECEPTOR"/>
    <property type="match status" value="1"/>
</dbReference>
<dbReference type="PANTHER" id="PTHR10225:SF2">
    <property type="entry name" value="LYMPHATIC VESSEL ENDOTHELIAL HYALURONIC ACID RECEPTOR 1"/>
    <property type="match status" value="1"/>
</dbReference>
<dbReference type="Pfam" id="PF00193">
    <property type="entry name" value="Xlink"/>
    <property type="match status" value="1"/>
</dbReference>
<dbReference type="PRINTS" id="PR01265">
    <property type="entry name" value="LINKMODULE"/>
</dbReference>
<dbReference type="SMART" id="SM00445">
    <property type="entry name" value="LINK"/>
    <property type="match status" value="1"/>
</dbReference>
<dbReference type="SUPFAM" id="SSF56436">
    <property type="entry name" value="C-type lectin-like"/>
    <property type="match status" value="1"/>
</dbReference>
<dbReference type="PROSITE" id="PS50963">
    <property type="entry name" value="LINK_2"/>
    <property type="match status" value="1"/>
</dbReference>